<gene>
    <name evidence="1" type="primary">psbB</name>
</gene>
<dbReference type="EMBL" id="X14107">
    <property type="protein sequence ID" value="CAA32264.1"/>
    <property type="molecule type" value="Genomic_DNA"/>
</dbReference>
<dbReference type="EMBL" id="EF115541">
    <property type="protein sequence ID" value="ABK79437.1"/>
    <property type="molecule type" value="Genomic_DNA"/>
</dbReference>
<dbReference type="PIR" id="A24589">
    <property type="entry name" value="A24589"/>
</dbReference>
<dbReference type="PIR" id="S04100">
    <property type="entry name" value="S04100"/>
</dbReference>
<dbReference type="RefSeq" id="YP_010144450.1">
    <property type="nucleotide sequence ID" value="NC_056985.1"/>
</dbReference>
<dbReference type="RefSeq" id="YP_874678.1">
    <property type="nucleotide sequence ID" value="NC_008590.1"/>
</dbReference>
<dbReference type="SMR" id="P10900"/>
<dbReference type="GeneID" id="4525075"/>
<dbReference type="GeneID" id="67140625"/>
<dbReference type="GO" id="GO:0009535">
    <property type="term" value="C:chloroplast thylakoid membrane"/>
    <property type="evidence" value="ECO:0007669"/>
    <property type="project" value="UniProtKB-SubCell"/>
</dbReference>
<dbReference type="GO" id="GO:0009523">
    <property type="term" value="C:photosystem II"/>
    <property type="evidence" value="ECO:0007669"/>
    <property type="project" value="UniProtKB-KW"/>
</dbReference>
<dbReference type="GO" id="GO:0016168">
    <property type="term" value="F:chlorophyll binding"/>
    <property type="evidence" value="ECO:0007669"/>
    <property type="project" value="UniProtKB-UniRule"/>
</dbReference>
<dbReference type="GO" id="GO:0045156">
    <property type="term" value="F:electron transporter, transferring electrons within the cyclic electron transport pathway of photosynthesis activity"/>
    <property type="evidence" value="ECO:0007669"/>
    <property type="project" value="InterPro"/>
</dbReference>
<dbReference type="GO" id="GO:0009772">
    <property type="term" value="P:photosynthetic electron transport in photosystem II"/>
    <property type="evidence" value="ECO:0007669"/>
    <property type="project" value="InterPro"/>
</dbReference>
<dbReference type="FunFam" id="3.10.680.10:FF:000001">
    <property type="entry name" value="Photosystem II CP47 reaction center protein"/>
    <property type="match status" value="1"/>
</dbReference>
<dbReference type="Gene3D" id="3.10.680.10">
    <property type="entry name" value="Photosystem II CP47 reaction center protein"/>
    <property type="match status" value="1"/>
</dbReference>
<dbReference type="HAMAP" id="MF_01495">
    <property type="entry name" value="PSII_PsbB_CP47"/>
    <property type="match status" value="1"/>
</dbReference>
<dbReference type="InterPro" id="IPR000932">
    <property type="entry name" value="PS_antenna-like"/>
</dbReference>
<dbReference type="InterPro" id="IPR036001">
    <property type="entry name" value="PS_II_antenna-like_sf"/>
</dbReference>
<dbReference type="InterPro" id="IPR017486">
    <property type="entry name" value="PSII_PsbB"/>
</dbReference>
<dbReference type="NCBIfam" id="TIGR03039">
    <property type="entry name" value="PS_II_CP47"/>
    <property type="match status" value="1"/>
</dbReference>
<dbReference type="PANTHER" id="PTHR33180">
    <property type="entry name" value="PHOTOSYSTEM II CP43 REACTION CENTER PROTEIN"/>
    <property type="match status" value="1"/>
</dbReference>
<dbReference type="PANTHER" id="PTHR33180:SF37">
    <property type="entry name" value="PHOTOSYSTEM II CP43 REACTION CENTER PROTEIN"/>
    <property type="match status" value="1"/>
</dbReference>
<dbReference type="Pfam" id="PF00421">
    <property type="entry name" value="PSII"/>
    <property type="match status" value="1"/>
</dbReference>
<dbReference type="SUPFAM" id="SSF161077">
    <property type="entry name" value="Photosystem II antenna protein-like"/>
    <property type="match status" value="1"/>
</dbReference>
<feature type="chain" id="PRO_0000077483" description="Photosystem II CP47 reaction center protein">
    <location>
        <begin position="1"/>
        <end position="508"/>
    </location>
</feature>
<feature type="transmembrane region" description="Helical" evidence="1">
    <location>
        <begin position="21"/>
        <end position="36"/>
    </location>
</feature>
<feature type="transmembrane region" description="Helical" evidence="1">
    <location>
        <begin position="101"/>
        <end position="115"/>
    </location>
</feature>
<feature type="transmembrane region" description="Helical" evidence="1">
    <location>
        <begin position="140"/>
        <end position="156"/>
    </location>
</feature>
<feature type="transmembrane region" description="Helical" evidence="1">
    <location>
        <begin position="203"/>
        <end position="218"/>
    </location>
</feature>
<feature type="transmembrane region" description="Helical" evidence="1">
    <location>
        <begin position="237"/>
        <end position="252"/>
    </location>
</feature>
<feature type="transmembrane region" description="Helical" evidence="1">
    <location>
        <begin position="457"/>
        <end position="472"/>
    </location>
</feature>
<feature type="sequence conflict" description="In Ref. 1; CAA32264." evidence="3" ref="1">
    <original>A</original>
    <variation>S</variation>
    <location>
        <position position="21"/>
    </location>
</feature>
<keyword id="KW-0148">Chlorophyll</keyword>
<keyword id="KW-0150">Chloroplast</keyword>
<keyword id="KW-0157">Chromophore</keyword>
<keyword id="KW-0903">Direct protein sequencing</keyword>
<keyword id="KW-0472">Membrane</keyword>
<keyword id="KW-0602">Photosynthesis</keyword>
<keyword id="KW-0604">Photosystem II</keyword>
<keyword id="KW-0934">Plastid</keyword>
<keyword id="KW-0793">Thylakoid</keyword>
<keyword id="KW-0812">Transmembrane</keyword>
<keyword id="KW-1133">Transmembrane helix</keyword>
<accession>P10900</accession>
<accession>A1E9L6</accession>
<sequence>MGLPWYRVHTVVLNDPGRLLAVHIMHTALVSGWAGSMALYELAVFDPSDPVLDPMWRQGMFVIPFMTRLGITDSWGGWSISGGTVTNPGIWSYEGVAATHIVFSGLCFLAAIWHWVYWDLEIFSDERTGKPSLDLPKIFGIHLFLAGVACFGFGAFHVTGLYGPGIWVSDPYGLTGKVQAVNPAWGAEGFDPFVPGGIASHHIAAGTLGILAGLFHLSVRPPQRLYKGLRMGNIETVLSSSIAAVFFAAFVVAGTMWYGSATTPIELFGPTRYQWDQGYFQQEIYRRVSNGLAENLSLSEAWSKIPEKLAFYDYIGNNPAKGGLFRAGSMDNGDGIAVGWLGHPVFRDKEGRELFVRRMPTFFETFPVVLVDEEGIVRADVPFRRAESKYSVEQVGVTVEFYGGELNGVNYSDPATVKKYARRSQLGEIFELDRATLKSDGVFRSSPRGWFTFGHATFALLFFFGHIWHGARTLFRDVFAGIDPDLDAQVEFGTFQKVGDPTTKKQAV</sequence>
<organism>
    <name type="scientific">Hordeum vulgare</name>
    <name type="common">Barley</name>
    <dbReference type="NCBI Taxonomy" id="4513"/>
    <lineage>
        <taxon>Eukaryota</taxon>
        <taxon>Viridiplantae</taxon>
        <taxon>Streptophyta</taxon>
        <taxon>Embryophyta</taxon>
        <taxon>Tracheophyta</taxon>
        <taxon>Spermatophyta</taxon>
        <taxon>Magnoliopsida</taxon>
        <taxon>Liliopsida</taxon>
        <taxon>Poales</taxon>
        <taxon>Poaceae</taxon>
        <taxon>BOP clade</taxon>
        <taxon>Pooideae</taxon>
        <taxon>Triticodae</taxon>
        <taxon>Triticeae</taxon>
        <taxon>Hordeinae</taxon>
        <taxon>Hordeum</taxon>
    </lineage>
</organism>
<protein>
    <recommendedName>
        <fullName evidence="1">Photosystem II CP47 reaction center protein</fullName>
    </recommendedName>
    <alternativeName>
        <fullName evidence="1">PSII 47 kDa protein</fullName>
    </alternativeName>
    <alternativeName>
        <fullName evidence="1">Protein CP-47</fullName>
    </alternativeName>
</protein>
<proteinExistence type="evidence at protein level"/>
<evidence type="ECO:0000255" key="1">
    <source>
        <dbReference type="HAMAP-Rule" id="MF_01495"/>
    </source>
</evidence>
<evidence type="ECO:0000269" key="2">
    <source ref="4"/>
</evidence>
<evidence type="ECO:0000305" key="3"/>
<geneLocation type="chloroplast"/>
<reference key="1">
    <citation type="journal article" date="1989" name="Nucleic Acids Res.">
        <title>Nucleotide sequence of the 5.2 kbp barley chloroplast DNA fragment, containing psbB-psbH-petB-petD gene cluster.</title>
        <authorList>
            <person name="Andreeva A.V."/>
            <person name="Buryakova A.A."/>
            <person name="Reverdatto S.V."/>
            <person name="Chakhmakhcheva O.G."/>
            <person name="Efimov V.A."/>
        </authorList>
    </citation>
    <scope>NUCLEOTIDE SEQUENCE [GENOMIC DNA]</scope>
    <source>
        <strain>cv. Sabarlis</strain>
    </source>
</reference>
<reference key="2">
    <citation type="journal article" date="1991" name="Bioorg. Khim.">
        <title>Photosystem II of rye. Nucleotide sequence of the psbB, psbC, psbE, psbF, psbH genes of rye and chloroplast DNA regions adjacent to them.</title>
        <authorList>
            <person name="Efimov V.A."/>
            <person name="Andreeva A.V."/>
            <person name="Reverdatto S.V."/>
            <person name="Chakhmakhcheva O.G."/>
        </authorList>
    </citation>
    <scope>NUCLEOTIDE SEQUENCE [GENOMIC DNA]</scope>
    <source>
        <strain>cv. Sabarlis</strain>
    </source>
</reference>
<reference key="3">
    <citation type="journal article" date="2007" name="Theor. Appl. Genet.">
        <title>Complete chloroplast genome sequences of Hordeum vulgare, Sorghum bicolor and Agrostis stolonifera, and comparative analyses with other grass genomes.</title>
        <authorList>
            <person name="Saski C."/>
            <person name="Lee S.-B."/>
            <person name="Fjellheim S."/>
            <person name="Guda C."/>
            <person name="Jansen R.K."/>
            <person name="Luo H."/>
            <person name="Tomkins J."/>
            <person name="Rognli O.A."/>
            <person name="Daniell H."/>
            <person name="Clarke J.L."/>
        </authorList>
    </citation>
    <scope>NUCLEOTIDE SEQUENCE [LARGE SCALE GENOMIC DNA]</scope>
    <source>
        <strain>cv. Morex</strain>
    </source>
</reference>
<reference key="4">
    <citation type="journal article" date="1985" name="Carlsberg Res. Commun.">
        <title>Isolation of the photosystem II reaction center complex from barley. Characterization by circular dichroism spectroscopy and amino acid sequencing.</title>
        <authorList>
            <person name="Hinz U.G."/>
        </authorList>
    </citation>
    <scope>PROTEIN SEQUENCE OF 411-420</scope>
    <scope>SUBCELLULAR LOCATION</scope>
    <source>
        <strain>cv. Svalofs Bonus</strain>
    </source>
</reference>
<name>PSBB_HORVU</name>
<comment type="function">
    <text evidence="1">One of the components of the core complex of photosystem II (PSII). It binds chlorophyll and helps catalyze the primary light-induced photochemical processes of PSII. PSII is a light-driven water:plastoquinone oxidoreductase, using light energy to abstract electrons from H(2)O, generating O(2) and a proton gradient subsequently used for ATP formation.</text>
</comment>
<comment type="cofactor">
    <text evidence="1">Binds multiple chlorophylls. PSII binds additional chlorophylls, carotenoids and specific lipids.</text>
</comment>
<comment type="subunit">
    <text evidence="1">PSII is composed of 1 copy each of membrane proteins PsbA, PsbB, PsbC, PsbD, PsbE, PsbF, PsbH, PsbI, PsbJ, PsbK, PsbL, PsbM, PsbT, PsbX, PsbY, PsbZ, Psb30/Ycf12, at least 3 peripheral proteins of the oxygen-evolving complex and a large number of cofactors. It forms dimeric complexes.</text>
</comment>
<comment type="subcellular location">
    <subcellularLocation>
        <location evidence="1 2">Plastid</location>
        <location evidence="1 2">Chloroplast thylakoid membrane</location>
        <topology evidence="1">Multi-pass membrane protein</topology>
    </subcellularLocation>
</comment>
<comment type="similarity">
    <text evidence="1">Belongs to the PsbB/PsbC family. PsbB subfamily.</text>
</comment>